<reference key="1">
    <citation type="journal article" date="2000" name="Nature">
        <title>The complete sequence of the mucosal pathogen Ureaplasma urealyticum.</title>
        <authorList>
            <person name="Glass J.I."/>
            <person name="Lefkowitz E.J."/>
            <person name="Glass J.S."/>
            <person name="Heiner C.R."/>
            <person name="Chen E.Y."/>
            <person name="Cassell G.H."/>
        </authorList>
    </citation>
    <scope>NUCLEOTIDE SEQUENCE [LARGE SCALE GENOMIC DNA]</scope>
    <source>
        <strain>ATCC 700970</strain>
    </source>
</reference>
<name>Y030_UREPA</name>
<protein>
    <recommendedName>
        <fullName>Uncharacterized protein UU030</fullName>
    </recommendedName>
</protein>
<accession>Q9PRB5</accession>
<comment type="subcellular location">
    <subcellularLocation>
        <location evidence="2">Membrane</location>
        <topology evidence="2">Single-pass membrane protein</topology>
    </subcellularLocation>
</comment>
<sequence length="747" mass="85861">MNLKTKFFLKVISVIAPIVIIPTILANCAHINSNELDNAKTNLKGSVEVVNINPYKTKQMLASNINKEQINSYFIFIFNLIKTNQKIEEKILDKNDYEILNWAANDNDGTLGINIYIKTTKQSYLINTKPVFLTDKQNNYLQELKYKTPAVYSIDEILKFSNNPYNLIHNNPYYREQLLRAKIYFNQNEANVDDSKLYMNKIGYSEFGSDVQKRLENAFKIRYDEQNIYQINSPQILAKETKTLTSYIDKKTNNNYSINIELIKKLIQINPFGKLPKNFAQLINLIKKEEYPKFLTITKNESVDNIVVKDIYYRIIDRYAKLEFILEIYNKKTKQTVYLSANFNQKNSGLLKNEDYFQYIFDRTISLDLLTTKDGKNVELNSGTGWIVDRIIDDSLPKNKIKLLIATNNHVMGWSNLAISKDNRMKSRWFNKQEYINYLENNAGFISSNIYEDKDRYQYLLWGTAPLKSPVSNKYNSLSGISFSNLAKVYNITNQNFINRAWYIPQLSANGIKINENLRTWYQINQEDIKSIKNGTLDFVLVPMVFDIEDIKEKLPNYYKVLNTKDEANWYIGLGNSKKYLPQLQLFSGGYPGDVNPNSSAIVSWRGSKSYGSLIQAFDREIKNESILDYYGPKQINNIDGYQKVGEGYLNKLFNVGTRVITSDEIGDLGSGSSGSMIIDSNFNLVGIHFASLNSRAYGAPNDSMIGNLFVAQSQDLSGDIDVRAAVIKKLKAENIYTYKLNPKVSS</sequence>
<keyword id="KW-0472">Membrane</keyword>
<keyword id="KW-1185">Reference proteome</keyword>
<keyword id="KW-0812">Transmembrane</keyword>
<keyword id="KW-1133">Transmembrane helix</keyword>
<feature type="chain" id="PRO_0000220782" description="Uncharacterized protein UU030">
    <location>
        <begin position="1"/>
        <end position="747"/>
    </location>
</feature>
<feature type="transmembrane region" description="Helical" evidence="1">
    <location>
        <begin position="7"/>
        <end position="27"/>
    </location>
</feature>
<evidence type="ECO:0000255" key="1"/>
<evidence type="ECO:0000305" key="2"/>
<organism>
    <name type="scientific">Ureaplasma parvum serovar 3 (strain ATCC 700970)</name>
    <dbReference type="NCBI Taxonomy" id="273119"/>
    <lineage>
        <taxon>Bacteria</taxon>
        <taxon>Bacillati</taxon>
        <taxon>Mycoplasmatota</taxon>
        <taxon>Mycoplasmoidales</taxon>
        <taxon>Mycoplasmoidaceae</taxon>
        <taxon>Ureaplasma</taxon>
    </lineage>
</organism>
<gene>
    <name type="ordered locus">UU030</name>
</gene>
<dbReference type="EMBL" id="AF222894">
    <property type="protein sequence ID" value="AAF30435.1"/>
    <property type="molecule type" value="Genomic_DNA"/>
</dbReference>
<dbReference type="RefSeq" id="WP_010891653.1">
    <property type="nucleotide sequence ID" value="NC_002162.1"/>
</dbReference>
<dbReference type="STRING" id="273119.UU030"/>
<dbReference type="EnsemblBacteria" id="AAF30435">
    <property type="protein sequence ID" value="AAF30435"/>
    <property type="gene ID" value="UU030"/>
</dbReference>
<dbReference type="GeneID" id="29672753"/>
<dbReference type="KEGG" id="uur:UU030"/>
<dbReference type="PATRIC" id="fig|273119.6.peg.30"/>
<dbReference type="eggNOG" id="ENOG5033T8T">
    <property type="taxonomic scope" value="Bacteria"/>
</dbReference>
<dbReference type="HOGENOM" id="CLU_372116_0_0_14"/>
<dbReference type="OrthoDB" id="404053at2"/>
<dbReference type="Proteomes" id="UP000000423">
    <property type="component" value="Chromosome"/>
</dbReference>
<dbReference type="GO" id="GO:0016020">
    <property type="term" value="C:membrane"/>
    <property type="evidence" value="ECO:0007669"/>
    <property type="project" value="UniProtKB-SubCell"/>
</dbReference>
<dbReference type="InterPro" id="IPR022382">
    <property type="entry name" value="Mycoplasma_peptidase_DUF31"/>
</dbReference>
<dbReference type="InterPro" id="IPR009003">
    <property type="entry name" value="Peptidase_S1_PA"/>
</dbReference>
<dbReference type="NCBIfam" id="NF045843">
    <property type="entry name" value="MAG2960_Ser_prot"/>
    <property type="match status" value="1"/>
</dbReference>
<dbReference type="Pfam" id="PF01732">
    <property type="entry name" value="Mycop_pep_DUF31"/>
    <property type="match status" value="1"/>
</dbReference>
<dbReference type="SUPFAM" id="SSF50494">
    <property type="entry name" value="Trypsin-like serine proteases"/>
    <property type="match status" value="1"/>
</dbReference>
<proteinExistence type="predicted"/>